<sequence>MGSDERKPLLSINDGDDDFNHQDVSTKTPPIKKESLSNKFKSFLKKSMTKETLPILIYVLLYIISGVINVVLLKKLMIKFVNYGFFLSQITNYGYLPIFLVAMWYKMYCTSDVPKETRNFPQYKFVIMGLLDAINGFFVVIGGVSTSGPLQQLLNQAIIPFTMIASFIFLRERYSLFQLGGAAVILGGVIVSLIPSLVGGSSGGNILFYNFFYLISVIPGALSNVYKDIAFQSIDMDVWYLQFWDCLYQSLFGSILFPVNNWLPPPATIKFTEIIPSMRDGALCLGGKNTILPIFNGTTSTLAFGSCGINDNFVCDDCHNTWIIVLIYMTVNIAYNIFILLVLKHAGATVYSIANTVILPLTNIFFSIHFIMGAATTPFSALSVAGLLLILFGLGGYRIGSMIKKPPPDSKKDSEQQGGEGGAGDGDSSDNKNNLGDSAEIPQQIQPKTQLHLRNQFFGRLGIDIPESRYRATNIINN</sequence>
<evidence type="ECO:0000250" key="1">
    <source>
        <dbReference type="UniProtKB" id="Q9N623"/>
    </source>
</evidence>
<evidence type="ECO:0000255" key="2"/>
<evidence type="ECO:0000256" key="3">
    <source>
        <dbReference type="SAM" id="MobiDB-lite"/>
    </source>
</evidence>
<evidence type="ECO:0000305" key="4"/>
<comment type="function">
    <text evidence="1">Nutrient transporter (By similarity). Involved in maintaining the osmotic homeostasis of the digestive vacuole (By similarity).</text>
</comment>
<comment type="subcellular location">
    <subcellularLocation>
        <location evidence="1">Vacuole membrane</location>
        <topology evidence="2">Multi-pass membrane protein</topology>
    </subcellularLocation>
</comment>
<comment type="similarity">
    <text evidence="4">Belongs to the CRT-like transporter family.</text>
</comment>
<accession>Q55C66</accession>
<gene>
    <name type="primary">crtp3</name>
    <name type="ORF">DDB_G0270204</name>
</gene>
<proteinExistence type="inferred from homology"/>
<organism>
    <name type="scientific">Dictyostelium discoideum</name>
    <name type="common">Social amoeba</name>
    <dbReference type="NCBI Taxonomy" id="44689"/>
    <lineage>
        <taxon>Eukaryota</taxon>
        <taxon>Amoebozoa</taxon>
        <taxon>Evosea</taxon>
        <taxon>Eumycetozoa</taxon>
        <taxon>Dictyostelia</taxon>
        <taxon>Dictyosteliales</taxon>
        <taxon>Dictyosteliaceae</taxon>
        <taxon>Dictyostelium</taxon>
    </lineage>
</organism>
<reference key="1">
    <citation type="journal article" date="2005" name="Nature">
        <title>The genome of the social amoeba Dictyostelium discoideum.</title>
        <authorList>
            <person name="Eichinger L."/>
            <person name="Pachebat J.A."/>
            <person name="Gloeckner G."/>
            <person name="Rajandream M.A."/>
            <person name="Sucgang R."/>
            <person name="Berriman M."/>
            <person name="Song J."/>
            <person name="Olsen R."/>
            <person name="Szafranski K."/>
            <person name="Xu Q."/>
            <person name="Tunggal B."/>
            <person name="Kummerfeld S."/>
            <person name="Madera M."/>
            <person name="Konfortov B.A."/>
            <person name="Rivero F."/>
            <person name="Bankier A.T."/>
            <person name="Lehmann R."/>
            <person name="Hamlin N."/>
            <person name="Davies R."/>
            <person name="Gaudet P."/>
            <person name="Fey P."/>
            <person name="Pilcher K."/>
            <person name="Chen G."/>
            <person name="Saunders D."/>
            <person name="Sodergren E.J."/>
            <person name="Davis P."/>
            <person name="Kerhornou A."/>
            <person name="Nie X."/>
            <person name="Hall N."/>
            <person name="Anjard C."/>
            <person name="Hemphill L."/>
            <person name="Bason N."/>
            <person name="Farbrother P."/>
            <person name="Desany B."/>
            <person name="Just E."/>
            <person name="Morio T."/>
            <person name="Rost R."/>
            <person name="Churcher C.M."/>
            <person name="Cooper J."/>
            <person name="Haydock S."/>
            <person name="van Driessche N."/>
            <person name="Cronin A."/>
            <person name="Goodhead I."/>
            <person name="Muzny D.M."/>
            <person name="Mourier T."/>
            <person name="Pain A."/>
            <person name="Lu M."/>
            <person name="Harper D."/>
            <person name="Lindsay R."/>
            <person name="Hauser H."/>
            <person name="James K.D."/>
            <person name="Quiles M."/>
            <person name="Madan Babu M."/>
            <person name="Saito T."/>
            <person name="Buchrieser C."/>
            <person name="Wardroper A."/>
            <person name="Felder M."/>
            <person name="Thangavelu M."/>
            <person name="Johnson D."/>
            <person name="Knights A."/>
            <person name="Loulseged H."/>
            <person name="Mungall K.L."/>
            <person name="Oliver K."/>
            <person name="Price C."/>
            <person name="Quail M.A."/>
            <person name="Urushihara H."/>
            <person name="Hernandez J."/>
            <person name="Rabbinowitsch E."/>
            <person name="Steffen D."/>
            <person name="Sanders M."/>
            <person name="Ma J."/>
            <person name="Kohara Y."/>
            <person name="Sharp S."/>
            <person name="Simmonds M.N."/>
            <person name="Spiegler S."/>
            <person name="Tivey A."/>
            <person name="Sugano S."/>
            <person name="White B."/>
            <person name="Walker D."/>
            <person name="Woodward J.R."/>
            <person name="Winckler T."/>
            <person name="Tanaka Y."/>
            <person name="Shaulsky G."/>
            <person name="Schleicher M."/>
            <person name="Weinstock G.M."/>
            <person name="Rosenthal A."/>
            <person name="Cox E.C."/>
            <person name="Chisholm R.L."/>
            <person name="Gibbs R.A."/>
            <person name="Loomis W.F."/>
            <person name="Platzer M."/>
            <person name="Kay R.R."/>
            <person name="Williams J.G."/>
            <person name="Dear P.H."/>
            <person name="Noegel A.A."/>
            <person name="Barrell B.G."/>
            <person name="Kuspa A."/>
        </authorList>
    </citation>
    <scope>NUCLEOTIDE SEQUENCE [LARGE SCALE GENOMIC DNA]</scope>
    <source>
        <strain>AX4</strain>
    </source>
</reference>
<reference key="2">
    <citation type="journal article" date="2005" name="J. Biol. Chem.">
        <title>Dictyostelium discoideum expresses a malaria chloroquine resistance mechanism upon transfection with mutant, but not wild-type, Plasmodium falciparum transporter PfCRT.</title>
        <authorList>
            <person name="Naude B."/>
            <person name="Brzostowski J.A."/>
            <person name="Kimmel A.R."/>
            <person name="Wellems T.E."/>
        </authorList>
    </citation>
    <scope>IDENTIFICATION</scope>
</reference>
<reference key="3">
    <citation type="journal article" date="2006" name="Mol. Biochem. Parasitol.">
        <title>Expression and function of pvcrt-o, a Plasmodium vivax ortholog of pfcrt, in Plasmodium falciparum and Dictyostelium discoideum.</title>
        <authorList>
            <person name="Sa J.M."/>
            <person name="Yamamoto M.M."/>
            <person name="Fernandez-Becerra C."/>
            <person name="de Azevedo M.F."/>
            <person name="Papakrivos J."/>
            <person name="Naude B."/>
            <person name="Wellems T.E."/>
            <person name="Del Portillo H.A."/>
        </authorList>
    </citation>
    <scope>IDENTIFICATION</scope>
</reference>
<name>CRTP3_DICDI</name>
<feature type="chain" id="PRO_0000385365" description="Crt homolog 3">
    <location>
        <begin position="1"/>
        <end position="478"/>
    </location>
</feature>
<feature type="topological domain" description="Cytoplasmic" evidence="4">
    <location>
        <begin position="1"/>
        <end position="52"/>
    </location>
</feature>
<feature type="transmembrane region" description="Helical" evidence="2">
    <location>
        <begin position="53"/>
        <end position="73"/>
    </location>
</feature>
<feature type="topological domain" description="Vacuolar" evidence="4">
    <location>
        <begin position="74"/>
        <end position="83"/>
    </location>
</feature>
<feature type="transmembrane region" description="Helical" evidence="2">
    <location>
        <begin position="84"/>
        <end position="104"/>
    </location>
</feature>
<feature type="topological domain" description="Cytoplasmic" evidence="4">
    <location>
        <begin position="105"/>
        <end position="124"/>
    </location>
</feature>
<feature type="transmembrane region" description="Helical" evidence="2">
    <location>
        <begin position="125"/>
        <end position="145"/>
    </location>
</feature>
<feature type="topological domain" description="Vacuolar" evidence="4">
    <location>
        <begin position="146"/>
        <end position="149"/>
    </location>
</feature>
<feature type="transmembrane region" description="Helical" evidence="2">
    <location>
        <begin position="150"/>
        <end position="170"/>
    </location>
</feature>
<feature type="topological domain" description="Cytoplasmic" evidence="4">
    <location>
        <begin position="171"/>
        <end position="178"/>
    </location>
</feature>
<feature type="transmembrane region" description="Helical" evidence="2">
    <location>
        <begin position="179"/>
        <end position="199"/>
    </location>
</feature>
<feature type="topological domain" description="Vacuolar" evidence="4">
    <location>
        <begin position="200"/>
        <end position="205"/>
    </location>
</feature>
<feature type="transmembrane region" description="Helical" evidence="2">
    <location>
        <begin position="206"/>
        <end position="226"/>
    </location>
</feature>
<feature type="topological domain" description="Cytoplasmic" evidence="4">
    <location>
        <begin position="227"/>
        <end position="237"/>
    </location>
</feature>
<feature type="transmembrane region" description="Helical" evidence="2">
    <location>
        <begin position="238"/>
        <end position="258"/>
    </location>
</feature>
<feature type="topological domain" description="Vacuolar" evidence="4">
    <location>
        <begin position="259"/>
        <end position="322"/>
    </location>
</feature>
<feature type="transmembrane region" description="Helical" evidence="2">
    <location>
        <begin position="323"/>
        <end position="343"/>
    </location>
</feature>
<feature type="topological domain" description="Cytoplasmic" evidence="4">
    <location>
        <begin position="344"/>
        <end position="352"/>
    </location>
</feature>
<feature type="transmembrane region" description="Helical" evidence="2">
    <location>
        <begin position="353"/>
        <end position="373"/>
    </location>
</feature>
<feature type="topological domain" description="Vacuolar" evidence="4">
    <location>
        <begin position="374"/>
        <end position="376"/>
    </location>
</feature>
<feature type="transmembrane region" description="Helical" evidence="2">
    <location>
        <begin position="377"/>
        <end position="397"/>
    </location>
</feature>
<feature type="topological domain" description="Cytoplasmic" evidence="4">
    <location>
        <begin position="398"/>
        <end position="478"/>
    </location>
</feature>
<feature type="region of interest" description="Disordered" evidence="3">
    <location>
        <begin position="1"/>
        <end position="30"/>
    </location>
</feature>
<feature type="region of interest" description="Disordered" evidence="3">
    <location>
        <begin position="404"/>
        <end position="446"/>
    </location>
</feature>
<feature type="compositionally biased region" description="Basic and acidic residues" evidence="3">
    <location>
        <begin position="406"/>
        <end position="415"/>
    </location>
</feature>
<feature type="glycosylation site" description="N-linked (GlcNAc...) asparagine" evidence="2">
    <location>
        <position position="296"/>
    </location>
</feature>
<dbReference type="EMBL" id="AAFI02000005">
    <property type="protein sequence ID" value="EAL72452.1"/>
    <property type="molecule type" value="Genomic_DNA"/>
</dbReference>
<dbReference type="RefSeq" id="XP_646615.1">
    <property type="nucleotide sequence ID" value="XM_641523.1"/>
</dbReference>
<dbReference type="SMR" id="Q55C66"/>
<dbReference type="FunCoup" id="Q55C66">
    <property type="interactions" value="2"/>
</dbReference>
<dbReference type="STRING" id="44689.Q55C66"/>
<dbReference type="GlyCosmos" id="Q55C66">
    <property type="glycosylation" value="1 site, No reported glycans"/>
</dbReference>
<dbReference type="GlyGen" id="Q55C66">
    <property type="glycosylation" value="1 site"/>
</dbReference>
<dbReference type="PaxDb" id="44689-DDB0232252"/>
<dbReference type="EnsemblProtists" id="EAL72452">
    <property type="protein sequence ID" value="EAL72452"/>
    <property type="gene ID" value="DDB_G0270204"/>
</dbReference>
<dbReference type="GeneID" id="8617587"/>
<dbReference type="KEGG" id="ddi:DDB_G0270204"/>
<dbReference type="dictyBase" id="DDB_G0270204">
    <property type="gene designation" value="crtp3"/>
</dbReference>
<dbReference type="VEuPathDB" id="AmoebaDB:DDB_G0270204"/>
<dbReference type="eggNOG" id="ENOG502QR5M">
    <property type="taxonomic scope" value="Eukaryota"/>
</dbReference>
<dbReference type="HOGENOM" id="CLU_571661_0_0_1"/>
<dbReference type="InParanoid" id="Q55C66"/>
<dbReference type="OMA" id="VNIAYNI"/>
<dbReference type="PhylomeDB" id="Q55C66"/>
<dbReference type="PRO" id="PR:Q55C66"/>
<dbReference type="Proteomes" id="UP000002195">
    <property type="component" value="Chromosome 1"/>
</dbReference>
<dbReference type="GO" id="GO:0005774">
    <property type="term" value="C:vacuolar membrane"/>
    <property type="evidence" value="ECO:0007669"/>
    <property type="project" value="UniProtKB-SubCell"/>
</dbReference>
<dbReference type="GO" id="GO:0042910">
    <property type="term" value="F:xenobiotic transmembrane transporter activity"/>
    <property type="evidence" value="ECO:0007669"/>
    <property type="project" value="InterPro"/>
</dbReference>
<dbReference type="GO" id="GO:0006865">
    <property type="term" value="P:amino acid transport"/>
    <property type="evidence" value="ECO:0007669"/>
    <property type="project" value="UniProtKB-KW"/>
</dbReference>
<dbReference type="InterPro" id="IPR013936">
    <property type="entry name" value="CRT-like"/>
</dbReference>
<dbReference type="InterPro" id="IPR017258">
    <property type="entry name" value="Transprt_Chloroquine"/>
</dbReference>
<dbReference type="PANTHER" id="PTHR31326">
    <property type="entry name" value="PROTEIN CLT2, CHLOROPLASTIC"/>
    <property type="match status" value="1"/>
</dbReference>
<dbReference type="PANTHER" id="PTHR31326:SF1">
    <property type="entry name" value="PROTEIN CLT2, CHLOROPLASTIC"/>
    <property type="match status" value="1"/>
</dbReference>
<dbReference type="Pfam" id="PF08627">
    <property type="entry name" value="CRT-like"/>
    <property type="match status" value="1"/>
</dbReference>
<dbReference type="PIRSF" id="PIRSF037671">
    <property type="entry name" value="Transprt_Chloroquine_res"/>
    <property type="match status" value="1"/>
</dbReference>
<dbReference type="SUPFAM" id="SSF103481">
    <property type="entry name" value="Multidrug resistance efflux transporter EmrE"/>
    <property type="match status" value="1"/>
</dbReference>
<protein>
    <recommendedName>
        <fullName>Crt homolog 3</fullName>
    </recommendedName>
    <alternativeName>
        <fullName>Chloroquine resistance transporter paralog 3</fullName>
        <shortName>DdCRTp3</shortName>
    </alternativeName>
</protein>
<keyword id="KW-0029">Amino-acid transport</keyword>
<keyword id="KW-0325">Glycoprotein</keyword>
<keyword id="KW-0472">Membrane</keyword>
<keyword id="KW-1185">Reference proteome</keyword>
<keyword id="KW-0812">Transmembrane</keyword>
<keyword id="KW-1133">Transmembrane helix</keyword>
<keyword id="KW-0813">Transport</keyword>
<keyword id="KW-0926">Vacuole</keyword>